<accession>Q7VRJ7</accession>
<protein>
    <recommendedName>
        <fullName evidence="1">Guanylate kinase</fullName>
        <ecNumber evidence="1">2.7.4.8</ecNumber>
    </recommendedName>
    <alternativeName>
        <fullName evidence="1">GMP kinase</fullName>
    </alternativeName>
</protein>
<proteinExistence type="inferred from homology"/>
<dbReference type="EC" id="2.7.4.8" evidence="1"/>
<dbReference type="EMBL" id="BX248583">
    <property type="protein sequence ID" value="CAD83291.1"/>
    <property type="molecule type" value="Genomic_DNA"/>
</dbReference>
<dbReference type="SMR" id="Q7VRJ7"/>
<dbReference type="STRING" id="203907.Bfl616"/>
<dbReference type="KEGG" id="bfl:Bfl616"/>
<dbReference type="eggNOG" id="COG0194">
    <property type="taxonomic scope" value="Bacteria"/>
</dbReference>
<dbReference type="HOGENOM" id="CLU_001715_1_0_6"/>
<dbReference type="OrthoDB" id="9808150at2"/>
<dbReference type="Proteomes" id="UP000002192">
    <property type="component" value="Chromosome"/>
</dbReference>
<dbReference type="GO" id="GO:0005829">
    <property type="term" value="C:cytosol"/>
    <property type="evidence" value="ECO:0007669"/>
    <property type="project" value="TreeGrafter"/>
</dbReference>
<dbReference type="GO" id="GO:0005524">
    <property type="term" value="F:ATP binding"/>
    <property type="evidence" value="ECO:0007669"/>
    <property type="project" value="UniProtKB-UniRule"/>
</dbReference>
<dbReference type="GO" id="GO:0004385">
    <property type="term" value="F:guanylate kinase activity"/>
    <property type="evidence" value="ECO:0007669"/>
    <property type="project" value="UniProtKB-UniRule"/>
</dbReference>
<dbReference type="CDD" id="cd00071">
    <property type="entry name" value="GMPK"/>
    <property type="match status" value="1"/>
</dbReference>
<dbReference type="FunFam" id="3.30.63.10:FF:000005">
    <property type="entry name" value="Guanylate kinase"/>
    <property type="match status" value="1"/>
</dbReference>
<dbReference type="Gene3D" id="3.30.63.10">
    <property type="entry name" value="Guanylate Kinase phosphate binding domain"/>
    <property type="match status" value="1"/>
</dbReference>
<dbReference type="Gene3D" id="3.40.50.300">
    <property type="entry name" value="P-loop containing nucleotide triphosphate hydrolases"/>
    <property type="match status" value="1"/>
</dbReference>
<dbReference type="HAMAP" id="MF_00328">
    <property type="entry name" value="Guanylate_kinase"/>
    <property type="match status" value="1"/>
</dbReference>
<dbReference type="InterPro" id="IPR008145">
    <property type="entry name" value="GK/Ca_channel_bsu"/>
</dbReference>
<dbReference type="InterPro" id="IPR008144">
    <property type="entry name" value="Guanylate_kin-like_dom"/>
</dbReference>
<dbReference type="InterPro" id="IPR017665">
    <property type="entry name" value="Guanylate_kinase"/>
</dbReference>
<dbReference type="InterPro" id="IPR020590">
    <property type="entry name" value="Guanylate_kinase_CS"/>
</dbReference>
<dbReference type="InterPro" id="IPR027417">
    <property type="entry name" value="P-loop_NTPase"/>
</dbReference>
<dbReference type="NCBIfam" id="TIGR03263">
    <property type="entry name" value="guanyl_kin"/>
    <property type="match status" value="1"/>
</dbReference>
<dbReference type="PANTHER" id="PTHR23117:SF13">
    <property type="entry name" value="GUANYLATE KINASE"/>
    <property type="match status" value="1"/>
</dbReference>
<dbReference type="PANTHER" id="PTHR23117">
    <property type="entry name" value="GUANYLATE KINASE-RELATED"/>
    <property type="match status" value="1"/>
</dbReference>
<dbReference type="Pfam" id="PF00625">
    <property type="entry name" value="Guanylate_kin"/>
    <property type="match status" value="1"/>
</dbReference>
<dbReference type="SMART" id="SM00072">
    <property type="entry name" value="GuKc"/>
    <property type="match status" value="1"/>
</dbReference>
<dbReference type="SUPFAM" id="SSF52540">
    <property type="entry name" value="P-loop containing nucleoside triphosphate hydrolases"/>
    <property type="match status" value="1"/>
</dbReference>
<dbReference type="PROSITE" id="PS00856">
    <property type="entry name" value="GUANYLATE_KINASE_1"/>
    <property type="match status" value="1"/>
</dbReference>
<dbReference type="PROSITE" id="PS50052">
    <property type="entry name" value="GUANYLATE_KINASE_2"/>
    <property type="match status" value="1"/>
</dbReference>
<name>KGUA_BLOFL</name>
<sequence length="210" mass="24549">MKKYSGLLGIISAPSGAGKSTLINALQKNDSILQIKLSISYTTRKKRPGEVHGKDYYFISIEEFQNMINQNMFLEYAKVFNHYYGTEKNSIKLMLNSGVHVILNIDWQGMNQIRNKKLDFYTIFILPPSQKELEKRLRFRGLDTDQVIFDRMKQAMNEISHCKEYDYIIINDDFNIALIYLQSVILSKQLKIDYQEYHNSNLINNLLSCL</sequence>
<keyword id="KW-0067">ATP-binding</keyword>
<keyword id="KW-0963">Cytoplasm</keyword>
<keyword id="KW-0418">Kinase</keyword>
<keyword id="KW-0547">Nucleotide-binding</keyword>
<keyword id="KW-1185">Reference proteome</keyword>
<keyword id="KW-0808">Transferase</keyword>
<reference key="1">
    <citation type="journal article" date="2003" name="Proc. Natl. Acad. Sci. U.S.A.">
        <title>The genome sequence of Blochmannia floridanus: comparative analysis of reduced genomes.</title>
        <authorList>
            <person name="Gil R."/>
            <person name="Silva F.J."/>
            <person name="Zientz E."/>
            <person name="Delmotte F."/>
            <person name="Gonzalez-Candelas F."/>
            <person name="Latorre A."/>
            <person name="Rausell C."/>
            <person name="Kamerbeek J."/>
            <person name="Gadau J."/>
            <person name="Hoelldobler B."/>
            <person name="van Ham R.C.H.J."/>
            <person name="Gross R."/>
            <person name="Moya A."/>
        </authorList>
    </citation>
    <scope>NUCLEOTIDE SEQUENCE [LARGE SCALE GENOMIC DNA]</scope>
</reference>
<gene>
    <name evidence="1" type="primary">gmk</name>
    <name type="ordered locus">Bfl616</name>
</gene>
<comment type="function">
    <text evidence="1">Essential for recycling GMP and indirectly, cGMP.</text>
</comment>
<comment type="catalytic activity">
    <reaction evidence="1">
        <text>GMP + ATP = GDP + ADP</text>
        <dbReference type="Rhea" id="RHEA:20780"/>
        <dbReference type="ChEBI" id="CHEBI:30616"/>
        <dbReference type="ChEBI" id="CHEBI:58115"/>
        <dbReference type="ChEBI" id="CHEBI:58189"/>
        <dbReference type="ChEBI" id="CHEBI:456216"/>
        <dbReference type="EC" id="2.7.4.8"/>
    </reaction>
</comment>
<comment type="subcellular location">
    <subcellularLocation>
        <location evidence="1">Cytoplasm</location>
    </subcellularLocation>
</comment>
<comment type="similarity">
    <text evidence="1">Belongs to the guanylate kinase family.</text>
</comment>
<organism>
    <name type="scientific">Blochmanniella floridana</name>
    <dbReference type="NCBI Taxonomy" id="203907"/>
    <lineage>
        <taxon>Bacteria</taxon>
        <taxon>Pseudomonadati</taxon>
        <taxon>Pseudomonadota</taxon>
        <taxon>Gammaproteobacteria</taxon>
        <taxon>Enterobacterales</taxon>
        <taxon>Enterobacteriaceae</taxon>
        <taxon>ant endosymbionts</taxon>
        <taxon>Candidatus Blochmanniella</taxon>
    </lineage>
</organism>
<evidence type="ECO:0000255" key="1">
    <source>
        <dbReference type="HAMAP-Rule" id="MF_00328"/>
    </source>
</evidence>
<feature type="chain" id="PRO_0000170516" description="Guanylate kinase">
    <location>
        <begin position="1"/>
        <end position="210"/>
    </location>
</feature>
<feature type="domain" description="Guanylate kinase-like" evidence="1">
    <location>
        <begin position="6"/>
        <end position="186"/>
    </location>
</feature>
<feature type="binding site" evidence="1">
    <location>
        <begin position="13"/>
        <end position="20"/>
    </location>
    <ligand>
        <name>ATP</name>
        <dbReference type="ChEBI" id="CHEBI:30616"/>
    </ligand>
</feature>